<proteinExistence type="inferred from homology"/>
<feature type="chain" id="PRO_0000138594" description="Peptide methionine sulfoxide reductase MsrA">
    <location>
        <begin position="1"/>
        <end position="169"/>
    </location>
</feature>
<feature type="active site" evidence="1">
    <location>
        <position position="10"/>
    </location>
</feature>
<dbReference type="EC" id="1.8.4.11" evidence="1"/>
<dbReference type="EMBL" id="AE009948">
    <property type="protein sequence ID" value="AAN00377.1"/>
    <property type="molecule type" value="Genomic_DNA"/>
</dbReference>
<dbReference type="RefSeq" id="NP_688504.1">
    <property type="nucleotide sequence ID" value="NC_004116.1"/>
</dbReference>
<dbReference type="RefSeq" id="WP_000438899.1">
    <property type="nucleotide sequence ID" value="NC_004116.1"/>
</dbReference>
<dbReference type="SMR" id="Q8DYH1"/>
<dbReference type="STRING" id="208435.SAG1510"/>
<dbReference type="GeneID" id="66886365"/>
<dbReference type="KEGG" id="sag:SAG1510"/>
<dbReference type="PATRIC" id="fig|208435.3.peg.1519"/>
<dbReference type="HOGENOM" id="CLU_031040_10_1_9"/>
<dbReference type="OrthoDB" id="4174719at2"/>
<dbReference type="Proteomes" id="UP000000821">
    <property type="component" value="Chromosome"/>
</dbReference>
<dbReference type="GO" id="GO:0033744">
    <property type="term" value="F:L-methionine:thioredoxin-disulfide S-oxidoreductase activity"/>
    <property type="evidence" value="ECO:0007669"/>
    <property type="project" value="RHEA"/>
</dbReference>
<dbReference type="GO" id="GO:0008113">
    <property type="term" value="F:peptide-methionine (S)-S-oxide reductase activity"/>
    <property type="evidence" value="ECO:0007669"/>
    <property type="project" value="UniProtKB-UniRule"/>
</dbReference>
<dbReference type="GO" id="GO:0036211">
    <property type="term" value="P:protein modification process"/>
    <property type="evidence" value="ECO:0007669"/>
    <property type="project" value="UniProtKB-UniRule"/>
</dbReference>
<dbReference type="Gene3D" id="3.30.1060.10">
    <property type="entry name" value="Peptide methionine sulphoxide reductase MsrA"/>
    <property type="match status" value="1"/>
</dbReference>
<dbReference type="HAMAP" id="MF_01401">
    <property type="entry name" value="MsrA"/>
    <property type="match status" value="1"/>
</dbReference>
<dbReference type="InterPro" id="IPR002569">
    <property type="entry name" value="Met_Sox_Rdtase_MsrA_dom"/>
</dbReference>
<dbReference type="InterPro" id="IPR036509">
    <property type="entry name" value="Met_Sox_Rdtase_MsrA_sf"/>
</dbReference>
<dbReference type="NCBIfam" id="TIGR00401">
    <property type="entry name" value="msrA"/>
    <property type="match status" value="1"/>
</dbReference>
<dbReference type="PANTHER" id="PTHR43774">
    <property type="entry name" value="PEPTIDE METHIONINE SULFOXIDE REDUCTASE"/>
    <property type="match status" value="1"/>
</dbReference>
<dbReference type="PANTHER" id="PTHR43774:SF1">
    <property type="entry name" value="PEPTIDE METHIONINE SULFOXIDE REDUCTASE MSRA 2"/>
    <property type="match status" value="1"/>
</dbReference>
<dbReference type="Pfam" id="PF01625">
    <property type="entry name" value="PMSR"/>
    <property type="match status" value="1"/>
</dbReference>
<dbReference type="SUPFAM" id="SSF55068">
    <property type="entry name" value="Peptide methionine sulfoxide reductase"/>
    <property type="match status" value="1"/>
</dbReference>
<comment type="function">
    <text evidence="1">Has an important function as a repair enzyme for proteins that have been inactivated by oxidation. Catalyzes the reversible oxidation-reduction of methionine sulfoxide in proteins to methionine.</text>
</comment>
<comment type="catalytic activity">
    <reaction evidence="1">
        <text>L-methionyl-[protein] + [thioredoxin]-disulfide + H2O = L-methionyl-(S)-S-oxide-[protein] + [thioredoxin]-dithiol</text>
        <dbReference type="Rhea" id="RHEA:14217"/>
        <dbReference type="Rhea" id="RHEA-COMP:10698"/>
        <dbReference type="Rhea" id="RHEA-COMP:10700"/>
        <dbReference type="Rhea" id="RHEA-COMP:12313"/>
        <dbReference type="Rhea" id="RHEA-COMP:12315"/>
        <dbReference type="ChEBI" id="CHEBI:15377"/>
        <dbReference type="ChEBI" id="CHEBI:16044"/>
        <dbReference type="ChEBI" id="CHEBI:29950"/>
        <dbReference type="ChEBI" id="CHEBI:44120"/>
        <dbReference type="ChEBI" id="CHEBI:50058"/>
        <dbReference type="EC" id="1.8.4.11"/>
    </reaction>
</comment>
<comment type="catalytic activity">
    <reaction evidence="1">
        <text>[thioredoxin]-disulfide + L-methionine + H2O = L-methionine (S)-S-oxide + [thioredoxin]-dithiol</text>
        <dbReference type="Rhea" id="RHEA:19993"/>
        <dbReference type="Rhea" id="RHEA-COMP:10698"/>
        <dbReference type="Rhea" id="RHEA-COMP:10700"/>
        <dbReference type="ChEBI" id="CHEBI:15377"/>
        <dbReference type="ChEBI" id="CHEBI:29950"/>
        <dbReference type="ChEBI" id="CHEBI:50058"/>
        <dbReference type="ChEBI" id="CHEBI:57844"/>
        <dbReference type="ChEBI" id="CHEBI:58772"/>
        <dbReference type="EC" id="1.8.4.11"/>
    </reaction>
</comment>
<comment type="similarity">
    <text evidence="1">Belongs to the MsrA Met sulfoxide reductase family.</text>
</comment>
<evidence type="ECO:0000255" key="1">
    <source>
        <dbReference type="HAMAP-Rule" id="MF_01401"/>
    </source>
</evidence>
<accession>Q8DYH1</accession>
<gene>
    <name evidence="1" type="primary">msrA</name>
    <name type="ordered locus">SAG1510</name>
</gene>
<protein>
    <recommendedName>
        <fullName evidence="1">Peptide methionine sulfoxide reductase MsrA</fullName>
        <shortName evidence="1">Protein-methionine-S-oxide reductase</shortName>
        <ecNumber evidence="1">1.8.4.11</ecNumber>
    </recommendedName>
    <alternativeName>
        <fullName evidence="1">Peptide-methionine (S)-S-oxide reductase</fullName>
        <shortName evidence="1">Peptide Met(O) reductase</shortName>
    </alternativeName>
</protein>
<keyword id="KW-0560">Oxidoreductase</keyword>
<keyword id="KW-1185">Reference proteome</keyword>
<sequence length="169" mass="19510">MERAIFAGGCFWCMVQPFEELDGIESVLSGYTGGHVENPTYKEVCSKTTGHTEAVEIIFNPEKISYADLVELYWAQTDPTDAFGQFEDRGDNYRPVIFYENEEQRQIAQKSKDKLQASGRFDRPIVTSIEPADTFYPAEDYHQAFYRTNPARYALSSARRHAFLEENWH</sequence>
<name>MSRA_STRA5</name>
<reference key="1">
    <citation type="journal article" date="2002" name="Proc. Natl. Acad. Sci. U.S.A.">
        <title>Complete genome sequence and comparative genomic analysis of an emerging human pathogen, serotype V Streptococcus agalactiae.</title>
        <authorList>
            <person name="Tettelin H."/>
            <person name="Masignani V."/>
            <person name="Cieslewicz M.J."/>
            <person name="Eisen J.A."/>
            <person name="Peterson S.N."/>
            <person name="Wessels M.R."/>
            <person name="Paulsen I.T."/>
            <person name="Nelson K.E."/>
            <person name="Margarit I."/>
            <person name="Read T.D."/>
            <person name="Madoff L.C."/>
            <person name="Wolf A.M."/>
            <person name="Beanan M.J."/>
            <person name="Brinkac L.M."/>
            <person name="Daugherty S.C."/>
            <person name="DeBoy R.T."/>
            <person name="Durkin A.S."/>
            <person name="Kolonay J.F."/>
            <person name="Madupu R."/>
            <person name="Lewis M.R."/>
            <person name="Radune D."/>
            <person name="Fedorova N.B."/>
            <person name="Scanlan D."/>
            <person name="Khouri H.M."/>
            <person name="Mulligan S."/>
            <person name="Carty H.A."/>
            <person name="Cline R.T."/>
            <person name="Van Aken S.E."/>
            <person name="Gill J."/>
            <person name="Scarselli M."/>
            <person name="Mora M."/>
            <person name="Iacobini E.T."/>
            <person name="Brettoni C."/>
            <person name="Galli G."/>
            <person name="Mariani M."/>
            <person name="Vegni F."/>
            <person name="Maione D."/>
            <person name="Rinaudo D."/>
            <person name="Rappuoli R."/>
            <person name="Telford J.L."/>
            <person name="Kasper D.L."/>
            <person name="Grandi G."/>
            <person name="Fraser C.M."/>
        </authorList>
    </citation>
    <scope>NUCLEOTIDE SEQUENCE [LARGE SCALE GENOMIC DNA]</scope>
    <source>
        <strain>ATCC BAA-611 / 2603 V/R</strain>
    </source>
</reference>
<organism>
    <name type="scientific">Streptococcus agalactiae serotype V (strain ATCC BAA-611 / 2603 V/R)</name>
    <dbReference type="NCBI Taxonomy" id="208435"/>
    <lineage>
        <taxon>Bacteria</taxon>
        <taxon>Bacillati</taxon>
        <taxon>Bacillota</taxon>
        <taxon>Bacilli</taxon>
        <taxon>Lactobacillales</taxon>
        <taxon>Streptococcaceae</taxon>
        <taxon>Streptococcus</taxon>
    </lineage>
</organism>